<reference key="1">
    <citation type="journal article" date="2006" name="Proc. Natl. Acad. Sci. U.S.A.">
        <title>Burkholderia xenovorans LB400 harbors a multi-replicon, 9.73-Mbp genome shaped for versatility.</title>
        <authorList>
            <person name="Chain P.S.G."/>
            <person name="Denef V.J."/>
            <person name="Konstantinidis K.T."/>
            <person name="Vergez L.M."/>
            <person name="Agullo L."/>
            <person name="Reyes V.L."/>
            <person name="Hauser L."/>
            <person name="Cordova M."/>
            <person name="Gomez L."/>
            <person name="Gonzalez M."/>
            <person name="Land M."/>
            <person name="Lao V."/>
            <person name="Larimer F."/>
            <person name="LiPuma J.J."/>
            <person name="Mahenthiralingam E."/>
            <person name="Malfatti S.A."/>
            <person name="Marx C.J."/>
            <person name="Parnell J.J."/>
            <person name="Ramette A."/>
            <person name="Richardson P."/>
            <person name="Seeger M."/>
            <person name="Smith D."/>
            <person name="Spilker T."/>
            <person name="Sul W.J."/>
            <person name="Tsoi T.V."/>
            <person name="Ulrich L.E."/>
            <person name="Zhulin I.B."/>
            <person name="Tiedje J.M."/>
        </authorList>
    </citation>
    <scope>NUCLEOTIDE SEQUENCE [LARGE SCALE GENOMIC DNA]</scope>
    <source>
        <strain>LB400</strain>
    </source>
</reference>
<proteinExistence type="inferred from homology"/>
<accession>Q13SQ3</accession>
<dbReference type="EMBL" id="CP000270">
    <property type="protein sequence ID" value="ABE32886.1"/>
    <property type="molecule type" value="Genomic_DNA"/>
</dbReference>
<dbReference type="RefSeq" id="WP_011490288.1">
    <property type="nucleotide sequence ID" value="NZ_CP008760.1"/>
</dbReference>
<dbReference type="SMR" id="Q13SQ3"/>
<dbReference type="STRING" id="266265.Bxe_A0041"/>
<dbReference type="KEGG" id="bxb:DR64_2220"/>
<dbReference type="KEGG" id="bxe:Bxe_A0041"/>
<dbReference type="PATRIC" id="fig|266265.5.peg.4572"/>
<dbReference type="eggNOG" id="COG0355">
    <property type="taxonomic scope" value="Bacteria"/>
</dbReference>
<dbReference type="OrthoDB" id="9791445at2"/>
<dbReference type="Proteomes" id="UP000001817">
    <property type="component" value="Chromosome 1"/>
</dbReference>
<dbReference type="GO" id="GO:0005886">
    <property type="term" value="C:plasma membrane"/>
    <property type="evidence" value="ECO:0007669"/>
    <property type="project" value="UniProtKB-SubCell"/>
</dbReference>
<dbReference type="GO" id="GO:0045259">
    <property type="term" value="C:proton-transporting ATP synthase complex"/>
    <property type="evidence" value="ECO:0007669"/>
    <property type="project" value="UniProtKB-KW"/>
</dbReference>
<dbReference type="GO" id="GO:0005524">
    <property type="term" value="F:ATP binding"/>
    <property type="evidence" value="ECO:0007669"/>
    <property type="project" value="UniProtKB-UniRule"/>
</dbReference>
<dbReference type="GO" id="GO:0046933">
    <property type="term" value="F:proton-transporting ATP synthase activity, rotational mechanism"/>
    <property type="evidence" value="ECO:0007669"/>
    <property type="project" value="UniProtKB-UniRule"/>
</dbReference>
<dbReference type="CDD" id="cd12152">
    <property type="entry name" value="F1-ATPase_delta"/>
    <property type="match status" value="1"/>
</dbReference>
<dbReference type="FunFam" id="2.60.15.10:FF:000001">
    <property type="entry name" value="ATP synthase epsilon chain"/>
    <property type="match status" value="1"/>
</dbReference>
<dbReference type="Gene3D" id="1.20.5.440">
    <property type="entry name" value="ATP synthase delta/epsilon subunit, C-terminal domain"/>
    <property type="match status" value="1"/>
</dbReference>
<dbReference type="Gene3D" id="2.60.15.10">
    <property type="entry name" value="F0F1 ATP synthase delta/epsilon subunit, N-terminal"/>
    <property type="match status" value="1"/>
</dbReference>
<dbReference type="HAMAP" id="MF_00530">
    <property type="entry name" value="ATP_synth_epsil_bac"/>
    <property type="match status" value="1"/>
</dbReference>
<dbReference type="InterPro" id="IPR036794">
    <property type="entry name" value="ATP_F1_dsu/esu_C_sf"/>
</dbReference>
<dbReference type="InterPro" id="IPR001469">
    <property type="entry name" value="ATP_synth_F1_dsu/esu"/>
</dbReference>
<dbReference type="InterPro" id="IPR020546">
    <property type="entry name" value="ATP_synth_F1_dsu/esu_N"/>
</dbReference>
<dbReference type="InterPro" id="IPR020547">
    <property type="entry name" value="ATP_synth_F1_esu_C"/>
</dbReference>
<dbReference type="InterPro" id="IPR036771">
    <property type="entry name" value="ATPsynth_dsu/esu_N"/>
</dbReference>
<dbReference type="NCBIfam" id="TIGR01216">
    <property type="entry name" value="ATP_synt_epsi"/>
    <property type="match status" value="1"/>
</dbReference>
<dbReference type="NCBIfam" id="NF001847">
    <property type="entry name" value="PRK00571.1-4"/>
    <property type="match status" value="1"/>
</dbReference>
<dbReference type="PANTHER" id="PTHR13822">
    <property type="entry name" value="ATP SYNTHASE DELTA/EPSILON CHAIN"/>
    <property type="match status" value="1"/>
</dbReference>
<dbReference type="PANTHER" id="PTHR13822:SF10">
    <property type="entry name" value="ATP SYNTHASE EPSILON CHAIN, CHLOROPLASTIC"/>
    <property type="match status" value="1"/>
</dbReference>
<dbReference type="Pfam" id="PF00401">
    <property type="entry name" value="ATP-synt_DE"/>
    <property type="match status" value="1"/>
</dbReference>
<dbReference type="Pfam" id="PF02823">
    <property type="entry name" value="ATP-synt_DE_N"/>
    <property type="match status" value="1"/>
</dbReference>
<dbReference type="SUPFAM" id="SSF46604">
    <property type="entry name" value="Epsilon subunit of F1F0-ATP synthase C-terminal domain"/>
    <property type="match status" value="1"/>
</dbReference>
<dbReference type="SUPFAM" id="SSF51344">
    <property type="entry name" value="Epsilon subunit of F1F0-ATP synthase N-terminal domain"/>
    <property type="match status" value="1"/>
</dbReference>
<protein>
    <recommendedName>
        <fullName evidence="1">ATP synthase epsilon chain 1</fullName>
    </recommendedName>
    <alternativeName>
        <fullName evidence="1">ATP synthase F1 sector epsilon subunit 1</fullName>
    </alternativeName>
    <alternativeName>
        <fullName evidence="1">F-ATPase epsilon subunit 1</fullName>
    </alternativeName>
</protein>
<sequence>MATIKVDVVSAEEQIFSGQAKFVALPGEAGELGILPGHTPLITRIRPGAVRIEAENGEEEFVFVAGGILEVQPGAVTVLADTAIRGKDLDEAKAEDARKRAEEALQNTGSNLEYATAQAELAYATAQLAAIQRLRKLRGQH</sequence>
<feature type="chain" id="PRO_0000265796" description="ATP synthase epsilon chain 1">
    <location>
        <begin position="1"/>
        <end position="141"/>
    </location>
</feature>
<evidence type="ECO:0000255" key="1">
    <source>
        <dbReference type="HAMAP-Rule" id="MF_00530"/>
    </source>
</evidence>
<keyword id="KW-0066">ATP synthesis</keyword>
<keyword id="KW-0997">Cell inner membrane</keyword>
<keyword id="KW-1003">Cell membrane</keyword>
<keyword id="KW-0139">CF(1)</keyword>
<keyword id="KW-0375">Hydrogen ion transport</keyword>
<keyword id="KW-0406">Ion transport</keyword>
<keyword id="KW-0472">Membrane</keyword>
<keyword id="KW-1185">Reference proteome</keyword>
<keyword id="KW-0813">Transport</keyword>
<comment type="function">
    <text evidence="1">Produces ATP from ADP in the presence of a proton gradient across the membrane.</text>
</comment>
<comment type="subunit">
    <text>F-type ATPases have 2 components, CF(1) - the catalytic core - and CF(0) - the membrane proton channel. CF(1) has five subunits: alpha(3), beta(3), gamma(1), delta(1), epsilon(1). CF(0) has three main subunits: a, b and c.</text>
</comment>
<comment type="subcellular location">
    <subcellularLocation>
        <location evidence="1">Cell inner membrane</location>
        <topology evidence="1">Peripheral membrane protein</topology>
    </subcellularLocation>
</comment>
<comment type="similarity">
    <text evidence="1">Belongs to the ATPase epsilon chain family.</text>
</comment>
<gene>
    <name evidence="1" type="primary">atpC1</name>
    <name type="ordered locus">Bxeno_A4348</name>
    <name type="ORF">Bxe_A0041</name>
</gene>
<organism>
    <name type="scientific">Paraburkholderia xenovorans (strain LB400)</name>
    <dbReference type="NCBI Taxonomy" id="266265"/>
    <lineage>
        <taxon>Bacteria</taxon>
        <taxon>Pseudomonadati</taxon>
        <taxon>Pseudomonadota</taxon>
        <taxon>Betaproteobacteria</taxon>
        <taxon>Burkholderiales</taxon>
        <taxon>Burkholderiaceae</taxon>
        <taxon>Paraburkholderia</taxon>
    </lineage>
</organism>
<name>ATPE1_PARXL</name>